<evidence type="ECO:0000255" key="1"/>
<evidence type="ECO:0000305" key="2"/>
<evidence type="ECO:0000305" key="3">
    <source>
    </source>
</evidence>
<reference key="1">
    <citation type="journal article" date="1990" name="J. Biol. Chem.">
        <title>The sequence and transcript heterogeneity of the yeast gene ALG1, an essential mannosyltransferase involved in N-glycosylation.</title>
        <authorList>
            <person name="Albright C.F."/>
            <person name="Robbins P.W."/>
        </authorList>
    </citation>
    <scope>NUCLEOTIDE SEQUENCE [GENOMIC DNA]</scope>
</reference>
<reference key="2">
    <citation type="journal article" date="1994" name="EMBO J.">
        <title>Complete DNA sequence of yeast chromosome II.</title>
        <authorList>
            <person name="Feldmann H."/>
            <person name="Aigle M."/>
            <person name="Aljinovic G."/>
            <person name="Andre B."/>
            <person name="Baclet M.C."/>
            <person name="Barthe C."/>
            <person name="Baur A."/>
            <person name="Becam A.-M."/>
            <person name="Biteau N."/>
            <person name="Boles E."/>
            <person name="Brandt T."/>
            <person name="Brendel M."/>
            <person name="Brueckner M."/>
            <person name="Bussereau F."/>
            <person name="Christiansen C."/>
            <person name="Contreras R."/>
            <person name="Crouzet M."/>
            <person name="Cziepluch C."/>
            <person name="Demolis N."/>
            <person name="Delaveau T."/>
            <person name="Doignon F."/>
            <person name="Domdey H."/>
            <person name="Duesterhus S."/>
            <person name="Dubois E."/>
            <person name="Dujon B."/>
            <person name="El Bakkoury M."/>
            <person name="Entian K.-D."/>
            <person name="Feuermann M."/>
            <person name="Fiers W."/>
            <person name="Fobo G.M."/>
            <person name="Fritz C."/>
            <person name="Gassenhuber J."/>
            <person name="Glansdorff N."/>
            <person name="Goffeau A."/>
            <person name="Grivell L.A."/>
            <person name="de Haan M."/>
            <person name="Hein C."/>
            <person name="Herbert C.J."/>
            <person name="Hollenberg C.P."/>
            <person name="Holmstroem K."/>
            <person name="Jacq C."/>
            <person name="Jacquet M."/>
            <person name="Jauniaux J.-C."/>
            <person name="Jonniaux J.-L."/>
            <person name="Kallesoee T."/>
            <person name="Kiesau P."/>
            <person name="Kirchrath L."/>
            <person name="Koetter P."/>
            <person name="Korol S."/>
            <person name="Liebl S."/>
            <person name="Logghe M."/>
            <person name="Lohan A.J.E."/>
            <person name="Louis E.J."/>
            <person name="Li Z.Y."/>
            <person name="Maat M.J."/>
            <person name="Mallet L."/>
            <person name="Mannhaupt G."/>
            <person name="Messenguy F."/>
            <person name="Miosga T."/>
            <person name="Molemans F."/>
            <person name="Mueller S."/>
            <person name="Nasr F."/>
            <person name="Obermaier B."/>
            <person name="Perea J."/>
            <person name="Pierard A."/>
            <person name="Piravandi E."/>
            <person name="Pohl F.M."/>
            <person name="Pohl T.M."/>
            <person name="Potier S."/>
            <person name="Proft M."/>
            <person name="Purnelle B."/>
            <person name="Ramezani Rad M."/>
            <person name="Rieger M."/>
            <person name="Rose M."/>
            <person name="Schaaff-Gerstenschlaeger I."/>
            <person name="Scherens B."/>
            <person name="Schwarzlose C."/>
            <person name="Skala J."/>
            <person name="Slonimski P.P."/>
            <person name="Smits P.H.M."/>
            <person name="Souciet J.-L."/>
            <person name="Steensma H.Y."/>
            <person name="Stucka R."/>
            <person name="Urrestarazu L.A."/>
            <person name="van der Aart Q.J.M."/>
            <person name="Van Dyck L."/>
            <person name="Vassarotti A."/>
            <person name="Vetter I."/>
            <person name="Vierendeels F."/>
            <person name="Vissers S."/>
            <person name="Wagner G."/>
            <person name="de Wergifosse P."/>
            <person name="Wolfe K.H."/>
            <person name="Zagulski M."/>
            <person name="Zimmermann F.K."/>
            <person name="Mewes H.-W."/>
            <person name="Kleine K."/>
        </authorList>
    </citation>
    <scope>NUCLEOTIDE SEQUENCE [LARGE SCALE GENOMIC DNA]</scope>
    <source>
        <strain>ATCC 204508 / S288c</strain>
    </source>
</reference>
<reference key="3">
    <citation type="journal article" date="2014" name="G3 (Bethesda)">
        <title>The reference genome sequence of Saccharomyces cerevisiae: Then and now.</title>
        <authorList>
            <person name="Engel S.R."/>
            <person name="Dietrich F.S."/>
            <person name="Fisk D.G."/>
            <person name="Binkley G."/>
            <person name="Balakrishnan R."/>
            <person name="Costanzo M.C."/>
            <person name="Dwight S.S."/>
            <person name="Hitz B.C."/>
            <person name="Karra K."/>
            <person name="Nash R.S."/>
            <person name="Weng S."/>
            <person name="Wong E.D."/>
            <person name="Lloyd P."/>
            <person name="Skrzypek M.S."/>
            <person name="Miyasato S.R."/>
            <person name="Simison M."/>
            <person name="Cherry J.M."/>
        </authorList>
    </citation>
    <scope>GENOME REANNOTATION</scope>
    <source>
        <strain>ATCC 204508 / S288c</strain>
    </source>
</reference>
<gene>
    <name type="ordered locus">YBR109W-A</name>
</gene>
<protein>
    <recommendedName>
        <fullName>Putative uncharacterized protein YBR109W-A</fullName>
    </recommendedName>
</protein>
<comment type="subcellular location">
    <subcellularLocation>
        <location evidence="2">Membrane</location>
        <topology evidence="2">Single-pass membrane protein</topology>
    </subcellularLocation>
</comment>
<comment type="caution">
    <text evidence="3">Product of a dubious gene prediction unlikely to encode a functional protein. Because of that it is not part of the S.cerevisiae S288c complete/reference proteome set.</text>
</comment>
<proteinExistence type="uncertain"/>
<name>YB09A_YEAST</name>
<organism>
    <name type="scientific">Saccharomyces cerevisiae (strain ATCC 204508 / S288c)</name>
    <name type="common">Baker's yeast</name>
    <dbReference type="NCBI Taxonomy" id="559292"/>
    <lineage>
        <taxon>Eukaryota</taxon>
        <taxon>Fungi</taxon>
        <taxon>Dikarya</taxon>
        <taxon>Ascomycota</taxon>
        <taxon>Saccharomycotina</taxon>
        <taxon>Saccharomycetes</taxon>
        <taxon>Saccharomycetales</taxon>
        <taxon>Saccharomycetaceae</taxon>
        <taxon>Saccharomyces</taxon>
    </lineage>
</organism>
<feature type="chain" id="PRO_0000299793" description="Putative uncharacterized protein YBR109W-A">
    <location>
        <begin position="1"/>
        <end position="74"/>
    </location>
</feature>
<feature type="transmembrane region" description="Helical" evidence="1">
    <location>
        <begin position="15"/>
        <end position="32"/>
    </location>
</feature>
<accession>P90471</accession>
<sequence>MVDVLRFYLCLLCRFLHALTVTFLSDIFVWLVAKTRSIQAVIILHVASIERAYSNHQVNWSYIFQSAISKAIRG</sequence>
<keyword id="KW-0472">Membrane</keyword>
<keyword id="KW-0812">Transmembrane</keyword>
<keyword id="KW-1133">Transmembrane helix</keyword>
<dbReference type="EMBL" id="J05416">
    <property type="protein sequence ID" value="AAA66321.1"/>
    <property type="molecule type" value="Genomic_DNA"/>
</dbReference>
<dbReference type="EMBL" id="Z35978">
    <property type="protein sequence ID" value="CAA85065.1"/>
    <property type="molecule type" value="Genomic_DNA"/>
</dbReference>
<dbReference type="EMBL" id="Z35979">
    <property type="protein sequence ID" value="CAA85066.1"/>
    <property type="molecule type" value="Genomic_DNA"/>
</dbReference>
<dbReference type="PIR" id="B35762">
    <property type="entry name" value="B35762"/>
</dbReference>
<dbReference type="IntAct" id="P90471">
    <property type="interactions" value="1"/>
</dbReference>
<dbReference type="MINT" id="P90471"/>
<dbReference type="PaxDb" id="4932-YBR109W-A"/>
<dbReference type="EnsemblFungi" id="YBR109W-A_mRNA">
    <property type="protein sequence ID" value="YBR109W-A"/>
    <property type="gene ID" value="YBR109W-A"/>
</dbReference>
<dbReference type="AGR" id="SGD:S000028737"/>
<dbReference type="SGD" id="S000028737">
    <property type="gene designation" value="YBR109W-A"/>
</dbReference>
<dbReference type="HOGENOM" id="CLU_2689709_0_0_1"/>
<dbReference type="GO" id="GO:0016020">
    <property type="term" value="C:membrane"/>
    <property type="evidence" value="ECO:0007669"/>
    <property type="project" value="UniProtKB-SubCell"/>
</dbReference>